<gene>
    <name type="primary">OPG208</name>
    <name type="synonym">SPI-1</name>
    <name type="ORF">B25R</name>
    <name type="ORF">C12L</name>
</gene>
<name>SPI1_VARV</name>
<proteinExistence type="inferred from homology"/>
<organism>
    <name type="scientific">Variola virus</name>
    <dbReference type="NCBI Taxonomy" id="10255"/>
    <lineage>
        <taxon>Viruses</taxon>
        <taxon>Varidnaviria</taxon>
        <taxon>Bamfordvirae</taxon>
        <taxon>Nucleocytoviricota</taxon>
        <taxon>Pokkesviricetes</taxon>
        <taxon>Chitovirales</taxon>
        <taxon>Poxviridae</taxon>
        <taxon>Chordopoxvirinae</taxon>
        <taxon>Orthopoxvirus</taxon>
    </lineage>
</organism>
<organismHost>
    <name type="scientific">Homo sapiens</name>
    <name type="common">Human</name>
    <dbReference type="NCBI Taxonomy" id="9606"/>
</organismHost>
<evidence type="ECO:0000250" key="1"/>
<evidence type="ECO:0000250" key="2">
    <source>
        <dbReference type="UniProtKB" id="P15058"/>
    </source>
</evidence>
<evidence type="ECO:0000305" key="3"/>
<dbReference type="EMBL" id="L22579">
    <property type="protein sequence ID" value="AAA60930.1"/>
    <property type="molecule type" value="Genomic_DNA"/>
</dbReference>
<dbReference type="EMBL" id="U18341">
    <property type="protein sequence ID" value="AAA69464.1"/>
    <property type="molecule type" value="Genomic_DNA"/>
</dbReference>
<dbReference type="PIR" id="T28620">
    <property type="entry name" value="T28620"/>
</dbReference>
<dbReference type="RefSeq" id="NP_042237.1">
    <property type="nucleotide sequence ID" value="NC_001611.1"/>
</dbReference>
<dbReference type="SMR" id="P0DOT4"/>
<dbReference type="GeneID" id="1486556"/>
<dbReference type="KEGG" id="vg:1486556"/>
<dbReference type="Proteomes" id="UP000119805">
    <property type="component" value="Segment"/>
</dbReference>
<dbReference type="GO" id="GO:0005615">
    <property type="term" value="C:extracellular space"/>
    <property type="evidence" value="ECO:0007669"/>
    <property type="project" value="InterPro"/>
</dbReference>
<dbReference type="GO" id="GO:0030430">
    <property type="term" value="C:host cell cytoplasm"/>
    <property type="evidence" value="ECO:0007669"/>
    <property type="project" value="UniProtKB-SubCell"/>
</dbReference>
<dbReference type="GO" id="GO:0004867">
    <property type="term" value="F:serine-type endopeptidase inhibitor activity"/>
    <property type="evidence" value="ECO:0007669"/>
    <property type="project" value="UniProtKB-KW"/>
</dbReference>
<dbReference type="CDD" id="cd19583">
    <property type="entry name" value="serpinN_SPI-1_SPI-2"/>
    <property type="match status" value="1"/>
</dbReference>
<dbReference type="Gene3D" id="2.30.39.10">
    <property type="entry name" value="Alpha-1-antitrypsin, domain 1"/>
    <property type="match status" value="1"/>
</dbReference>
<dbReference type="Gene3D" id="3.30.497.10">
    <property type="entry name" value="Antithrombin, subunit I, domain 2"/>
    <property type="match status" value="1"/>
</dbReference>
<dbReference type="InterPro" id="IPR023795">
    <property type="entry name" value="Serpin_CS"/>
</dbReference>
<dbReference type="InterPro" id="IPR023796">
    <property type="entry name" value="Serpin_dom"/>
</dbReference>
<dbReference type="InterPro" id="IPR000215">
    <property type="entry name" value="Serpin_fam"/>
</dbReference>
<dbReference type="InterPro" id="IPR036186">
    <property type="entry name" value="Serpin_sf"/>
</dbReference>
<dbReference type="InterPro" id="IPR042178">
    <property type="entry name" value="Serpin_sf_1"/>
</dbReference>
<dbReference type="InterPro" id="IPR042185">
    <property type="entry name" value="Serpin_sf_2"/>
</dbReference>
<dbReference type="PANTHER" id="PTHR11461:SF211">
    <property type="entry name" value="GH10112P-RELATED"/>
    <property type="match status" value="1"/>
</dbReference>
<dbReference type="PANTHER" id="PTHR11461">
    <property type="entry name" value="SERINE PROTEASE INHIBITOR, SERPIN"/>
    <property type="match status" value="1"/>
</dbReference>
<dbReference type="Pfam" id="PF00079">
    <property type="entry name" value="Serpin"/>
    <property type="match status" value="1"/>
</dbReference>
<dbReference type="SMART" id="SM00093">
    <property type="entry name" value="SERPIN"/>
    <property type="match status" value="1"/>
</dbReference>
<dbReference type="SUPFAM" id="SSF56574">
    <property type="entry name" value="Serpins"/>
    <property type="match status" value="1"/>
</dbReference>
<dbReference type="PROSITE" id="PS00284">
    <property type="entry name" value="SERPIN"/>
    <property type="match status" value="1"/>
</dbReference>
<reference key="1">
    <citation type="journal article" date="1993" name="Nature">
        <title>Potential virulence determinants in terminal regions of variola smallpox virus genome.</title>
        <authorList>
            <person name="Massung R.F."/>
            <person name="Esposito J.J."/>
            <person name="Liu L.I."/>
            <person name="Qi J."/>
            <person name="Utterback T.R."/>
            <person name="Knight J.C."/>
            <person name="Aubin L."/>
            <person name="Yuran T.E."/>
            <person name="Parsons J.M."/>
            <person name="Loparev V.N."/>
            <person name="Selivanov N.A."/>
            <person name="Cavallaro K.F."/>
            <person name="Kerlavage A.R."/>
            <person name="Mahy B.W.J."/>
            <person name="Venter J.C."/>
        </authorList>
    </citation>
    <scope>NUCLEOTIDE SEQUENCE [GENOMIC DNA]</scope>
    <source>
        <strain>Bangladesh-1975</strain>
    </source>
</reference>
<reference key="2">
    <citation type="submission" date="1994-12" db="EMBL/GenBank/DDBJ databases">
        <authorList>
            <person name="Massung R.F."/>
            <person name="Loparev V.N."/>
            <person name="Knight J.C."/>
            <person name="Chizhikov V.E."/>
            <person name="Parsons J.M."/>
            <person name="Totmenin A.V."/>
            <person name="Shchelkunov S.N."/>
            <person name="Esposito J.J."/>
        </authorList>
    </citation>
    <scope>NUCLEOTIDE SEQUENCE [GENOMIC DNA]</scope>
    <source>
        <strain>Somalia-1977</strain>
    </source>
</reference>
<accession>P0DOT4</accession>
<accession>P33829</accession>
<sequence length="372" mass="43136">MIYIIYRYRYCLVYTMDIFKELILKYPDENVLISPVSILSTLSILNHGAAGSTAEQLSKYIENVNENTPDDKKDDNNDMDVDVPYCATLAIANKIYCSDSIEFHASFLQKIKDDFQTVNFNNANQTKELINEWVKTMTNGKINSLLTSPLPINTRMTVVSAVHFKAMWKYPFSKHLTYTDKFYISKNIVTSVDMMVSTENDLQYVHINELFGGFSIIDIPYEGNSSMVIILPDDIEGLYNIEKHITEENFKKWCGKLYTKSIDLYMPKFKLKMTESYNLVPILENLGLTNIFGYYADFSKMCNETITVEKFLHKTFIDVNEEYTEASAITGVFMTNFSMVYRTKVYINHPFIYMIKDNTGRILFIGKYCYPQ</sequence>
<keyword id="KW-0244">Early protein</keyword>
<keyword id="KW-1035">Host cytoplasm</keyword>
<keyword id="KW-0646">Protease inhibitor</keyword>
<keyword id="KW-0722">Serine protease inhibitor</keyword>
<comment type="function">
    <text evidence="2">Plays a role in mediating viral host range. May act to inhibit a caspase independent form of apoptosis to allow efficient virus replication in infected cells.</text>
</comment>
<comment type="subcellular location">
    <subcellularLocation>
        <location evidence="2">Host cytoplasm</location>
    </subcellularLocation>
</comment>
<comment type="similarity">
    <text evidence="3">Belongs to the serpin family. Poxviruses subfamily.</text>
</comment>
<protein>
    <recommendedName>
        <fullName>Serine proteinase inhibitor 1</fullName>
        <shortName>Serp-1</shortName>
        <shortName>Serpin-1</shortName>
    </recommendedName>
</protein>
<feature type="chain" id="PRO_0000448125" description="Serine proteinase inhibitor 1">
    <location>
        <begin position="1"/>
        <end position="372"/>
    </location>
</feature>
<feature type="site" description="Reactive bond" evidence="1">
    <location>
        <begin position="337"/>
        <end position="338"/>
    </location>
</feature>